<feature type="chain" id="PRO_1000079131" description="Enolase">
    <location>
        <begin position="1"/>
        <end position="428"/>
    </location>
</feature>
<feature type="active site" description="Proton donor" evidence="1">
    <location>
        <position position="207"/>
    </location>
</feature>
<feature type="active site" description="Proton acceptor" evidence="1">
    <location>
        <position position="337"/>
    </location>
</feature>
<feature type="binding site" evidence="1">
    <location>
        <position position="165"/>
    </location>
    <ligand>
        <name>(2R)-2-phosphoglycerate</name>
        <dbReference type="ChEBI" id="CHEBI:58289"/>
    </ligand>
</feature>
<feature type="binding site" evidence="1">
    <location>
        <position position="244"/>
    </location>
    <ligand>
        <name>Mg(2+)</name>
        <dbReference type="ChEBI" id="CHEBI:18420"/>
    </ligand>
</feature>
<feature type="binding site" evidence="1">
    <location>
        <position position="285"/>
    </location>
    <ligand>
        <name>Mg(2+)</name>
        <dbReference type="ChEBI" id="CHEBI:18420"/>
    </ligand>
</feature>
<feature type="binding site" evidence="1">
    <location>
        <position position="312"/>
    </location>
    <ligand>
        <name>Mg(2+)</name>
        <dbReference type="ChEBI" id="CHEBI:18420"/>
    </ligand>
</feature>
<feature type="binding site" evidence="1">
    <location>
        <position position="337"/>
    </location>
    <ligand>
        <name>(2R)-2-phosphoglycerate</name>
        <dbReference type="ChEBI" id="CHEBI:58289"/>
    </ligand>
</feature>
<feature type="binding site" evidence="1">
    <location>
        <position position="366"/>
    </location>
    <ligand>
        <name>(2R)-2-phosphoglycerate</name>
        <dbReference type="ChEBI" id="CHEBI:58289"/>
    </ligand>
</feature>
<feature type="binding site" evidence="1">
    <location>
        <position position="367"/>
    </location>
    <ligand>
        <name>(2R)-2-phosphoglycerate</name>
        <dbReference type="ChEBI" id="CHEBI:58289"/>
    </ligand>
</feature>
<feature type="binding site" evidence="1">
    <location>
        <position position="388"/>
    </location>
    <ligand>
        <name>(2R)-2-phosphoglycerate</name>
        <dbReference type="ChEBI" id="CHEBI:58289"/>
    </ligand>
</feature>
<reference key="1">
    <citation type="submission" date="2007-11" db="EMBL/GenBank/DDBJ databases">
        <title>Genome sequencing of phylogenetically and phenotypically diverse Coxiella burnetii isolates.</title>
        <authorList>
            <person name="Seshadri R."/>
            <person name="Samuel J.E."/>
        </authorList>
    </citation>
    <scope>NUCLEOTIDE SEQUENCE [LARGE SCALE GENOMIC DNA]</scope>
    <source>
        <strain>RSA 331 / Henzerling II</strain>
    </source>
</reference>
<accession>A9N9U9</accession>
<name>ENO_COXBR</name>
<protein>
    <recommendedName>
        <fullName evidence="1">Enolase</fullName>
        <ecNumber evidence="1">4.2.1.11</ecNumber>
    </recommendedName>
    <alternativeName>
        <fullName evidence="1">2-phospho-D-glycerate hydro-lyase</fullName>
    </alternativeName>
    <alternativeName>
        <fullName evidence="1">2-phosphoglycerate dehydratase</fullName>
    </alternativeName>
</protein>
<dbReference type="EC" id="4.2.1.11" evidence="1"/>
<dbReference type="EMBL" id="CP000890">
    <property type="protein sequence ID" value="ABX77623.1"/>
    <property type="molecule type" value="Genomic_DNA"/>
</dbReference>
<dbReference type="RefSeq" id="WP_005770583.1">
    <property type="nucleotide sequence ID" value="NC_010117.1"/>
</dbReference>
<dbReference type="SMR" id="A9N9U9"/>
<dbReference type="KEGG" id="cbs:COXBURSA331_A1865"/>
<dbReference type="HOGENOM" id="CLU_031223_2_1_6"/>
<dbReference type="UniPathway" id="UPA00109">
    <property type="reaction ID" value="UER00187"/>
</dbReference>
<dbReference type="GO" id="GO:0009986">
    <property type="term" value="C:cell surface"/>
    <property type="evidence" value="ECO:0007669"/>
    <property type="project" value="UniProtKB-SubCell"/>
</dbReference>
<dbReference type="GO" id="GO:0005576">
    <property type="term" value="C:extracellular region"/>
    <property type="evidence" value="ECO:0007669"/>
    <property type="project" value="UniProtKB-SubCell"/>
</dbReference>
<dbReference type="GO" id="GO:0000015">
    <property type="term" value="C:phosphopyruvate hydratase complex"/>
    <property type="evidence" value="ECO:0007669"/>
    <property type="project" value="InterPro"/>
</dbReference>
<dbReference type="GO" id="GO:0000287">
    <property type="term" value="F:magnesium ion binding"/>
    <property type="evidence" value="ECO:0007669"/>
    <property type="project" value="UniProtKB-UniRule"/>
</dbReference>
<dbReference type="GO" id="GO:0004634">
    <property type="term" value="F:phosphopyruvate hydratase activity"/>
    <property type="evidence" value="ECO:0007669"/>
    <property type="project" value="UniProtKB-UniRule"/>
</dbReference>
<dbReference type="GO" id="GO:0006096">
    <property type="term" value="P:glycolytic process"/>
    <property type="evidence" value="ECO:0007669"/>
    <property type="project" value="UniProtKB-UniRule"/>
</dbReference>
<dbReference type="CDD" id="cd03313">
    <property type="entry name" value="enolase"/>
    <property type="match status" value="1"/>
</dbReference>
<dbReference type="FunFam" id="3.20.20.120:FF:000001">
    <property type="entry name" value="Enolase"/>
    <property type="match status" value="1"/>
</dbReference>
<dbReference type="FunFam" id="3.30.390.10:FF:000001">
    <property type="entry name" value="Enolase"/>
    <property type="match status" value="1"/>
</dbReference>
<dbReference type="Gene3D" id="3.20.20.120">
    <property type="entry name" value="Enolase-like C-terminal domain"/>
    <property type="match status" value="1"/>
</dbReference>
<dbReference type="Gene3D" id="3.30.390.10">
    <property type="entry name" value="Enolase-like, N-terminal domain"/>
    <property type="match status" value="1"/>
</dbReference>
<dbReference type="HAMAP" id="MF_00318">
    <property type="entry name" value="Enolase"/>
    <property type="match status" value="1"/>
</dbReference>
<dbReference type="InterPro" id="IPR000941">
    <property type="entry name" value="Enolase"/>
</dbReference>
<dbReference type="InterPro" id="IPR036849">
    <property type="entry name" value="Enolase-like_C_sf"/>
</dbReference>
<dbReference type="InterPro" id="IPR029017">
    <property type="entry name" value="Enolase-like_N"/>
</dbReference>
<dbReference type="InterPro" id="IPR020810">
    <property type="entry name" value="Enolase_C"/>
</dbReference>
<dbReference type="InterPro" id="IPR020809">
    <property type="entry name" value="Enolase_CS"/>
</dbReference>
<dbReference type="InterPro" id="IPR020811">
    <property type="entry name" value="Enolase_N"/>
</dbReference>
<dbReference type="NCBIfam" id="TIGR01060">
    <property type="entry name" value="eno"/>
    <property type="match status" value="1"/>
</dbReference>
<dbReference type="PANTHER" id="PTHR11902">
    <property type="entry name" value="ENOLASE"/>
    <property type="match status" value="1"/>
</dbReference>
<dbReference type="PANTHER" id="PTHR11902:SF1">
    <property type="entry name" value="ENOLASE"/>
    <property type="match status" value="1"/>
</dbReference>
<dbReference type="Pfam" id="PF00113">
    <property type="entry name" value="Enolase_C"/>
    <property type="match status" value="1"/>
</dbReference>
<dbReference type="Pfam" id="PF03952">
    <property type="entry name" value="Enolase_N"/>
    <property type="match status" value="1"/>
</dbReference>
<dbReference type="PIRSF" id="PIRSF001400">
    <property type="entry name" value="Enolase"/>
    <property type="match status" value="1"/>
</dbReference>
<dbReference type="PRINTS" id="PR00148">
    <property type="entry name" value="ENOLASE"/>
</dbReference>
<dbReference type="SFLD" id="SFLDS00001">
    <property type="entry name" value="Enolase"/>
    <property type="match status" value="1"/>
</dbReference>
<dbReference type="SFLD" id="SFLDF00002">
    <property type="entry name" value="enolase"/>
    <property type="match status" value="1"/>
</dbReference>
<dbReference type="SMART" id="SM01192">
    <property type="entry name" value="Enolase_C"/>
    <property type="match status" value="1"/>
</dbReference>
<dbReference type="SMART" id="SM01193">
    <property type="entry name" value="Enolase_N"/>
    <property type="match status" value="1"/>
</dbReference>
<dbReference type="SUPFAM" id="SSF51604">
    <property type="entry name" value="Enolase C-terminal domain-like"/>
    <property type="match status" value="1"/>
</dbReference>
<dbReference type="SUPFAM" id="SSF54826">
    <property type="entry name" value="Enolase N-terminal domain-like"/>
    <property type="match status" value="1"/>
</dbReference>
<dbReference type="PROSITE" id="PS00164">
    <property type="entry name" value="ENOLASE"/>
    <property type="match status" value="1"/>
</dbReference>
<comment type="function">
    <text evidence="1">Catalyzes the reversible conversion of 2-phosphoglycerate (2-PG) into phosphoenolpyruvate (PEP). It is essential for the degradation of carbohydrates via glycolysis.</text>
</comment>
<comment type="catalytic activity">
    <reaction evidence="1">
        <text>(2R)-2-phosphoglycerate = phosphoenolpyruvate + H2O</text>
        <dbReference type="Rhea" id="RHEA:10164"/>
        <dbReference type="ChEBI" id="CHEBI:15377"/>
        <dbReference type="ChEBI" id="CHEBI:58289"/>
        <dbReference type="ChEBI" id="CHEBI:58702"/>
        <dbReference type="EC" id="4.2.1.11"/>
    </reaction>
</comment>
<comment type="cofactor">
    <cofactor evidence="1">
        <name>Mg(2+)</name>
        <dbReference type="ChEBI" id="CHEBI:18420"/>
    </cofactor>
    <text evidence="1">Binds a second Mg(2+) ion via substrate during catalysis.</text>
</comment>
<comment type="pathway">
    <text evidence="1">Carbohydrate degradation; glycolysis; pyruvate from D-glyceraldehyde 3-phosphate: step 4/5.</text>
</comment>
<comment type="subunit">
    <text evidence="1">Component of the RNA degradosome, a multiprotein complex involved in RNA processing and mRNA degradation.</text>
</comment>
<comment type="subcellular location">
    <subcellularLocation>
        <location evidence="1">Cytoplasm</location>
    </subcellularLocation>
    <subcellularLocation>
        <location evidence="1">Secreted</location>
    </subcellularLocation>
    <subcellularLocation>
        <location evidence="1">Cell surface</location>
    </subcellularLocation>
    <text evidence="1">Fractions of enolase are present in both the cytoplasm and on the cell surface.</text>
</comment>
<comment type="similarity">
    <text evidence="1">Belongs to the enolase family.</text>
</comment>
<organism>
    <name type="scientific">Coxiella burnetii (strain RSA 331 / Henzerling II)</name>
    <dbReference type="NCBI Taxonomy" id="360115"/>
    <lineage>
        <taxon>Bacteria</taxon>
        <taxon>Pseudomonadati</taxon>
        <taxon>Pseudomonadota</taxon>
        <taxon>Gammaproteobacteria</taxon>
        <taxon>Legionellales</taxon>
        <taxon>Coxiellaceae</taxon>
        <taxon>Coxiella</taxon>
    </lineage>
</organism>
<keyword id="KW-0963">Cytoplasm</keyword>
<keyword id="KW-0324">Glycolysis</keyword>
<keyword id="KW-0456">Lyase</keyword>
<keyword id="KW-0460">Magnesium</keyword>
<keyword id="KW-0479">Metal-binding</keyword>
<keyword id="KW-0964">Secreted</keyword>
<sequence>MTATITDINAHEILDSRANPTLEVRVTLSSQAYGCAAVPSGASTGEREAVELRDNDLERYGGKGVLQAVENVNGPIRDALLGQDPRSQEEIDRIMIELDGTENKANLGANAILGVSLAVAYAAANNADLPLYRYLGGDGGPFSMPVPMMNIINGGAHATNNLDFQEFMIVPVGAPTFAEALRYGAEVFHALKKRLVSRGLMSAVGDEGGFAPDLPNNEAAFELILEAIEDANYVPGKDIYLALDAASSELYQNGRYDFENNQLTSEEMIDRLTEWTKKYPVISIEDGLSENDWAGWKLLTERLENKVQLVGDDIFVTNPDILEKGIKKNIANAILVKLNQIGTLTETLATVGLAKSNKYGVIISHRSGETEDTTIADLAVATDARQIKTGSLCRSDRVAKYNRLLQIERELNDQAPYAGKEAFLFNRK</sequence>
<proteinExistence type="inferred from homology"/>
<gene>
    <name evidence="1" type="primary">eno</name>
    <name type="ordered locus">COXBURSA331_A1865</name>
</gene>
<evidence type="ECO:0000255" key="1">
    <source>
        <dbReference type="HAMAP-Rule" id="MF_00318"/>
    </source>
</evidence>